<sequence>MAALDGLPPLRDVIQRHGLDARKALGQNFLLDLNLTQKVARTAGGLEGMTVFEVGPGPGGLTRAILALGAKKVIAVERDARCLPALAEIADHYPGRLEVIEGDALKADFESLAPEGAVKIIANLPYNVGTQLLVNWLLPKAWPPFWQSLTLMFQKEVGERIVATEDDDHYGRLGVLCGWRTEARMAFDVPPQAFTPPPKVTSTVVHLTPRKNPIPCSVANLEKVTQAAFGQRRKMLRQSLKPLGGESLLVKAGIDPARRAETLSVEEFCLLANSL</sequence>
<comment type="function">
    <text evidence="1">Specifically dimethylates two adjacent adenosines (A1518 and A1519) in the loop of a conserved hairpin near the 3'-end of 16S rRNA in the 30S particle. May play a critical role in biogenesis of 30S subunits.</text>
</comment>
<comment type="catalytic activity">
    <reaction evidence="1">
        <text>adenosine(1518)/adenosine(1519) in 16S rRNA + 4 S-adenosyl-L-methionine = N(6)-dimethyladenosine(1518)/N(6)-dimethyladenosine(1519) in 16S rRNA + 4 S-adenosyl-L-homocysteine + 4 H(+)</text>
        <dbReference type="Rhea" id="RHEA:19609"/>
        <dbReference type="Rhea" id="RHEA-COMP:10232"/>
        <dbReference type="Rhea" id="RHEA-COMP:10233"/>
        <dbReference type="ChEBI" id="CHEBI:15378"/>
        <dbReference type="ChEBI" id="CHEBI:57856"/>
        <dbReference type="ChEBI" id="CHEBI:59789"/>
        <dbReference type="ChEBI" id="CHEBI:74411"/>
        <dbReference type="ChEBI" id="CHEBI:74493"/>
        <dbReference type="EC" id="2.1.1.182"/>
    </reaction>
</comment>
<comment type="subcellular location">
    <subcellularLocation>
        <location evidence="1">Cytoplasm</location>
    </subcellularLocation>
</comment>
<comment type="similarity">
    <text evidence="1">Belongs to the class I-like SAM-binding methyltransferase superfamily. rRNA adenine N(6)-methyltransferase family. RsmA subfamily.</text>
</comment>
<keyword id="KW-0963">Cytoplasm</keyword>
<keyword id="KW-0489">Methyltransferase</keyword>
<keyword id="KW-0694">RNA-binding</keyword>
<keyword id="KW-0698">rRNA processing</keyword>
<keyword id="KW-0949">S-adenosyl-L-methionine</keyword>
<keyword id="KW-0808">Transferase</keyword>
<feature type="chain" id="PRO_1000130310" description="Ribosomal RNA small subunit methyltransferase A">
    <location>
        <begin position="1"/>
        <end position="275"/>
    </location>
</feature>
<feature type="binding site" evidence="1">
    <location>
        <position position="28"/>
    </location>
    <ligand>
        <name>S-adenosyl-L-methionine</name>
        <dbReference type="ChEBI" id="CHEBI:59789"/>
    </ligand>
</feature>
<feature type="binding site" evidence="1">
    <location>
        <position position="30"/>
    </location>
    <ligand>
        <name>S-adenosyl-L-methionine</name>
        <dbReference type="ChEBI" id="CHEBI:59789"/>
    </ligand>
</feature>
<feature type="binding site" evidence="1">
    <location>
        <position position="55"/>
    </location>
    <ligand>
        <name>S-adenosyl-L-methionine</name>
        <dbReference type="ChEBI" id="CHEBI:59789"/>
    </ligand>
</feature>
<feature type="binding site" evidence="1">
    <location>
        <position position="77"/>
    </location>
    <ligand>
        <name>S-adenosyl-L-methionine</name>
        <dbReference type="ChEBI" id="CHEBI:59789"/>
    </ligand>
</feature>
<feature type="binding site" evidence="1">
    <location>
        <position position="103"/>
    </location>
    <ligand>
        <name>S-adenosyl-L-methionine</name>
        <dbReference type="ChEBI" id="CHEBI:59789"/>
    </ligand>
</feature>
<feature type="binding site" evidence="1">
    <location>
        <position position="123"/>
    </location>
    <ligand>
        <name>S-adenosyl-L-methionine</name>
        <dbReference type="ChEBI" id="CHEBI:59789"/>
    </ligand>
</feature>
<accession>B3PUU6</accession>
<protein>
    <recommendedName>
        <fullName evidence="1">Ribosomal RNA small subunit methyltransferase A</fullName>
        <ecNumber evidence="1">2.1.1.182</ecNumber>
    </recommendedName>
    <alternativeName>
        <fullName evidence="1">16S rRNA (adenine(1518)-N(6)/adenine(1519)-N(6))-dimethyltransferase</fullName>
    </alternativeName>
    <alternativeName>
        <fullName evidence="1">16S rRNA dimethyladenosine transferase</fullName>
    </alternativeName>
    <alternativeName>
        <fullName evidence="1">16S rRNA dimethylase</fullName>
    </alternativeName>
    <alternativeName>
        <fullName evidence="1">S-adenosylmethionine-6-N', N'-adenosyl(rRNA) dimethyltransferase</fullName>
    </alternativeName>
</protein>
<reference key="1">
    <citation type="journal article" date="2010" name="Appl. Environ. Microbiol.">
        <title>Conserved symbiotic plasmid DNA sequences in the multireplicon pangenomic structure of Rhizobium etli.</title>
        <authorList>
            <person name="Gonzalez V."/>
            <person name="Acosta J.L."/>
            <person name="Santamaria R.I."/>
            <person name="Bustos P."/>
            <person name="Fernandez J.L."/>
            <person name="Hernandez Gonzalez I.L."/>
            <person name="Diaz R."/>
            <person name="Flores M."/>
            <person name="Palacios R."/>
            <person name="Mora J."/>
            <person name="Davila G."/>
        </authorList>
    </citation>
    <scope>NUCLEOTIDE SEQUENCE [LARGE SCALE GENOMIC DNA]</scope>
    <source>
        <strain>CIAT 652</strain>
    </source>
</reference>
<proteinExistence type="inferred from homology"/>
<name>RSMA_RHIE6</name>
<gene>
    <name evidence="1" type="primary">rsmA</name>
    <name evidence="1" type="synonym">ksgA</name>
    <name type="ordered locus">RHECIAT_CH0001517</name>
</gene>
<organism>
    <name type="scientific">Rhizobium etli (strain CIAT 652)</name>
    <dbReference type="NCBI Taxonomy" id="491916"/>
    <lineage>
        <taxon>Bacteria</taxon>
        <taxon>Pseudomonadati</taxon>
        <taxon>Pseudomonadota</taxon>
        <taxon>Alphaproteobacteria</taxon>
        <taxon>Hyphomicrobiales</taxon>
        <taxon>Rhizobiaceae</taxon>
        <taxon>Rhizobium/Agrobacterium group</taxon>
        <taxon>Rhizobium</taxon>
    </lineage>
</organism>
<dbReference type="EC" id="2.1.1.182" evidence="1"/>
<dbReference type="EMBL" id="CP001074">
    <property type="protein sequence ID" value="ACE90495.1"/>
    <property type="molecule type" value="Genomic_DNA"/>
</dbReference>
<dbReference type="SMR" id="B3PUU6"/>
<dbReference type="KEGG" id="rec:RHECIAT_CH0001517"/>
<dbReference type="eggNOG" id="COG0030">
    <property type="taxonomic scope" value="Bacteria"/>
</dbReference>
<dbReference type="HOGENOM" id="CLU_041220_0_1_5"/>
<dbReference type="Proteomes" id="UP000008817">
    <property type="component" value="Chromosome"/>
</dbReference>
<dbReference type="GO" id="GO:0005829">
    <property type="term" value="C:cytosol"/>
    <property type="evidence" value="ECO:0007669"/>
    <property type="project" value="TreeGrafter"/>
</dbReference>
<dbReference type="GO" id="GO:0052908">
    <property type="term" value="F:16S rRNA (adenine(1518)-N(6)/adenine(1519)-N(6))-dimethyltransferase activity"/>
    <property type="evidence" value="ECO:0007669"/>
    <property type="project" value="UniProtKB-EC"/>
</dbReference>
<dbReference type="GO" id="GO:0003723">
    <property type="term" value="F:RNA binding"/>
    <property type="evidence" value="ECO:0007669"/>
    <property type="project" value="UniProtKB-KW"/>
</dbReference>
<dbReference type="CDD" id="cd02440">
    <property type="entry name" value="AdoMet_MTases"/>
    <property type="match status" value="1"/>
</dbReference>
<dbReference type="FunFam" id="1.10.8.100:FF:000001">
    <property type="entry name" value="Ribosomal RNA small subunit methyltransferase A"/>
    <property type="match status" value="1"/>
</dbReference>
<dbReference type="Gene3D" id="1.10.8.100">
    <property type="entry name" value="Ribosomal RNA adenine dimethylase-like, domain 2"/>
    <property type="match status" value="1"/>
</dbReference>
<dbReference type="Gene3D" id="3.40.50.150">
    <property type="entry name" value="Vaccinia Virus protein VP39"/>
    <property type="match status" value="1"/>
</dbReference>
<dbReference type="HAMAP" id="MF_00607">
    <property type="entry name" value="16SrRNA_methyltr_A"/>
    <property type="match status" value="1"/>
</dbReference>
<dbReference type="InterPro" id="IPR001737">
    <property type="entry name" value="KsgA/Erm"/>
</dbReference>
<dbReference type="InterPro" id="IPR023165">
    <property type="entry name" value="rRNA_Ade_diMease-like_C"/>
</dbReference>
<dbReference type="InterPro" id="IPR020596">
    <property type="entry name" value="rRNA_Ade_Mease_Trfase_CS"/>
</dbReference>
<dbReference type="InterPro" id="IPR020598">
    <property type="entry name" value="rRNA_Ade_methylase_Trfase_N"/>
</dbReference>
<dbReference type="InterPro" id="IPR011530">
    <property type="entry name" value="rRNA_adenine_dimethylase"/>
</dbReference>
<dbReference type="InterPro" id="IPR029063">
    <property type="entry name" value="SAM-dependent_MTases_sf"/>
</dbReference>
<dbReference type="NCBIfam" id="TIGR00755">
    <property type="entry name" value="ksgA"/>
    <property type="match status" value="1"/>
</dbReference>
<dbReference type="PANTHER" id="PTHR11727">
    <property type="entry name" value="DIMETHYLADENOSINE TRANSFERASE"/>
    <property type="match status" value="1"/>
</dbReference>
<dbReference type="PANTHER" id="PTHR11727:SF7">
    <property type="entry name" value="DIMETHYLADENOSINE TRANSFERASE-RELATED"/>
    <property type="match status" value="1"/>
</dbReference>
<dbReference type="Pfam" id="PF00398">
    <property type="entry name" value="RrnaAD"/>
    <property type="match status" value="1"/>
</dbReference>
<dbReference type="SMART" id="SM00650">
    <property type="entry name" value="rADc"/>
    <property type="match status" value="1"/>
</dbReference>
<dbReference type="SUPFAM" id="SSF53335">
    <property type="entry name" value="S-adenosyl-L-methionine-dependent methyltransferases"/>
    <property type="match status" value="1"/>
</dbReference>
<dbReference type="PROSITE" id="PS01131">
    <property type="entry name" value="RRNA_A_DIMETH"/>
    <property type="match status" value="1"/>
</dbReference>
<dbReference type="PROSITE" id="PS51689">
    <property type="entry name" value="SAM_RNA_A_N6_MT"/>
    <property type="match status" value="1"/>
</dbReference>
<evidence type="ECO:0000255" key="1">
    <source>
        <dbReference type="HAMAP-Rule" id="MF_00607"/>
    </source>
</evidence>